<feature type="chain" id="PRO_0000152442" description="Imidazole glycerol phosphate synthase subunit HisH">
    <location>
        <begin position="1"/>
        <end position="204"/>
    </location>
</feature>
<feature type="domain" description="Glutamine amidotransferase type-1" evidence="1">
    <location>
        <begin position="5"/>
        <end position="204"/>
    </location>
</feature>
<feature type="active site" description="Nucleophile" evidence="1">
    <location>
        <position position="80"/>
    </location>
</feature>
<feature type="active site" evidence="1">
    <location>
        <position position="186"/>
    </location>
</feature>
<feature type="active site" evidence="1">
    <location>
        <position position="188"/>
    </location>
</feature>
<protein>
    <recommendedName>
        <fullName evidence="1">Imidazole glycerol phosphate synthase subunit HisH</fullName>
        <ecNumber evidence="1">4.3.2.10</ecNumber>
    </recommendedName>
    <alternativeName>
        <fullName evidence="1">IGP synthase glutaminase subunit</fullName>
        <ecNumber evidence="1">3.5.1.2</ecNumber>
    </alternativeName>
    <alternativeName>
        <fullName evidence="1">IGP synthase subunit HisH</fullName>
    </alternativeName>
    <alternativeName>
        <fullName evidence="1">ImGP synthase subunit HisH</fullName>
        <shortName evidence="1">IGPS subunit HisH</shortName>
    </alternativeName>
</protein>
<name>HIS5_VIBPA</name>
<organism>
    <name type="scientific">Vibrio parahaemolyticus serotype O3:K6 (strain RIMD 2210633)</name>
    <dbReference type="NCBI Taxonomy" id="223926"/>
    <lineage>
        <taxon>Bacteria</taxon>
        <taxon>Pseudomonadati</taxon>
        <taxon>Pseudomonadota</taxon>
        <taxon>Gammaproteobacteria</taxon>
        <taxon>Vibrionales</taxon>
        <taxon>Vibrionaceae</taxon>
        <taxon>Vibrio</taxon>
    </lineage>
</organism>
<keyword id="KW-0028">Amino-acid biosynthesis</keyword>
<keyword id="KW-0963">Cytoplasm</keyword>
<keyword id="KW-0315">Glutamine amidotransferase</keyword>
<keyword id="KW-0368">Histidine biosynthesis</keyword>
<keyword id="KW-0378">Hydrolase</keyword>
<keyword id="KW-0456">Lyase</keyword>
<sequence length="204" mass="22345">MTEQKVVIIDTGCANVSSVKFAIERLGYDVTISKDPQVVLSADKLFLPGVGTASEAMKNLEERDLINLVKQVEKPLLGICLGMQLLGKFSQEKGQKADELVECLGLCDGEVKLLQTGDLPLPHMGWNTVSAKAGNPLFKDIEEGEYFYFVHSFAMPVGDYTIAECDYGNPFTAAVQSGNYYGVQFHPERSSKAGAKLIQNFLEL</sequence>
<dbReference type="EC" id="4.3.2.10" evidence="1"/>
<dbReference type="EC" id="3.5.1.2" evidence="1"/>
<dbReference type="EMBL" id="BA000031">
    <property type="protein sequence ID" value="BAC59404.1"/>
    <property type="molecule type" value="Genomic_DNA"/>
</dbReference>
<dbReference type="RefSeq" id="NP_797520.1">
    <property type="nucleotide sequence ID" value="NC_004603.1"/>
</dbReference>
<dbReference type="RefSeq" id="WP_005460004.1">
    <property type="nucleotide sequence ID" value="NC_004603.1"/>
</dbReference>
<dbReference type="SMR" id="Q87QK8"/>
<dbReference type="GeneID" id="1188646"/>
<dbReference type="KEGG" id="vpa:VP1141"/>
<dbReference type="PATRIC" id="fig|223926.6.peg.1083"/>
<dbReference type="eggNOG" id="COG0118">
    <property type="taxonomic scope" value="Bacteria"/>
</dbReference>
<dbReference type="HOGENOM" id="CLU_071837_0_0_6"/>
<dbReference type="UniPathway" id="UPA00031">
    <property type="reaction ID" value="UER00010"/>
</dbReference>
<dbReference type="Proteomes" id="UP000002493">
    <property type="component" value="Chromosome 1"/>
</dbReference>
<dbReference type="GO" id="GO:0005737">
    <property type="term" value="C:cytoplasm"/>
    <property type="evidence" value="ECO:0007669"/>
    <property type="project" value="UniProtKB-SubCell"/>
</dbReference>
<dbReference type="GO" id="GO:0004359">
    <property type="term" value="F:glutaminase activity"/>
    <property type="evidence" value="ECO:0007669"/>
    <property type="project" value="UniProtKB-EC"/>
</dbReference>
<dbReference type="GO" id="GO:0000107">
    <property type="term" value="F:imidazoleglycerol-phosphate synthase activity"/>
    <property type="evidence" value="ECO:0007669"/>
    <property type="project" value="UniProtKB-UniRule"/>
</dbReference>
<dbReference type="GO" id="GO:0016829">
    <property type="term" value="F:lyase activity"/>
    <property type="evidence" value="ECO:0007669"/>
    <property type="project" value="UniProtKB-KW"/>
</dbReference>
<dbReference type="GO" id="GO:0000105">
    <property type="term" value="P:L-histidine biosynthetic process"/>
    <property type="evidence" value="ECO:0007669"/>
    <property type="project" value="UniProtKB-UniRule"/>
</dbReference>
<dbReference type="CDD" id="cd01748">
    <property type="entry name" value="GATase1_IGP_Synthase"/>
    <property type="match status" value="1"/>
</dbReference>
<dbReference type="FunFam" id="3.40.50.880:FF:000009">
    <property type="entry name" value="Imidazole glycerol phosphate synthase subunit HisH"/>
    <property type="match status" value="1"/>
</dbReference>
<dbReference type="Gene3D" id="3.40.50.880">
    <property type="match status" value="1"/>
</dbReference>
<dbReference type="HAMAP" id="MF_00278">
    <property type="entry name" value="HisH"/>
    <property type="match status" value="1"/>
</dbReference>
<dbReference type="InterPro" id="IPR029062">
    <property type="entry name" value="Class_I_gatase-like"/>
</dbReference>
<dbReference type="InterPro" id="IPR017926">
    <property type="entry name" value="GATASE"/>
</dbReference>
<dbReference type="InterPro" id="IPR010139">
    <property type="entry name" value="Imidazole-glycPsynth_HisH"/>
</dbReference>
<dbReference type="NCBIfam" id="TIGR01855">
    <property type="entry name" value="IMP_synth_hisH"/>
    <property type="match status" value="1"/>
</dbReference>
<dbReference type="PANTHER" id="PTHR42701">
    <property type="entry name" value="IMIDAZOLE GLYCEROL PHOSPHATE SYNTHASE SUBUNIT HISH"/>
    <property type="match status" value="1"/>
</dbReference>
<dbReference type="PANTHER" id="PTHR42701:SF1">
    <property type="entry name" value="IMIDAZOLE GLYCEROL PHOSPHATE SYNTHASE SUBUNIT HISH"/>
    <property type="match status" value="1"/>
</dbReference>
<dbReference type="Pfam" id="PF00117">
    <property type="entry name" value="GATase"/>
    <property type="match status" value="1"/>
</dbReference>
<dbReference type="PIRSF" id="PIRSF000495">
    <property type="entry name" value="Amidotransf_hisH"/>
    <property type="match status" value="1"/>
</dbReference>
<dbReference type="SUPFAM" id="SSF52317">
    <property type="entry name" value="Class I glutamine amidotransferase-like"/>
    <property type="match status" value="1"/>
</dbReference>
<dbReference type="PROSITE" id="PS51273">
    <property type="entry name" value="GATASE_TYPE_1"/>
    <property type="match status" value="1"/>
</dbReference>
<proteinExistence type="inferred from homology"/>
<comment type="function">
    <text evidence="1">IGPS catalyzes the conversion of PRFAR and glutamine to IGP, AICAR and glutamate. The HisH subunit catalyzes the hydrolysis of glutamine to glutamate and ammonia as part of the synthesis of IGP and AICAR. The resulting ammonia molecule is channeled to the active site of HisF.</text>
</comment>
<comment type="catalytic activity">
    <reaction evidence="1">
        <text>5-[(5-phospho-1-deoxy-D-ribulos-1-ylimino)methylamino]-1-(5-phospho-beta-D-ribosyl)imidazole-4-carboxamide + L-glutamine = D-erythro-1-(imidazol-4-yl)glycerol 3-phosphate + 5-amino-1-(5-phospho-beta-D-ribosyl)imidazole-4-carboxamide + L-glutamate + H(+)</text>
        <dbReference type="Rhea" id="RHEA:24793"/>
        <dbReference type="ChEBI" id="CHEBI:15378"/>
        <dbReference type="ChEBI" id="CHEBI:29985"/>
        <dbReference type="ChEBI" id="CHEBI:58278"/>
        <dbReference type="ChEBI" id="CHEBI:58359"/>
        <dbReference type="ChEBI" id="CHEBI:58475"/>
        <dbReference type="ChEBI" id="CHEBI:58525"/>
        <dbReference type="EC" id="4.3.2.10"/>
    </reaction>
</comment>
<comment type="catalytic activity">
    <reaction evidence="1">
        <text>L-glutamine + H2O = L-glutamate + NH4(+)</text>
        <dbReference type="Rhea" id="RHEA:15889"/>
        <dbReference type="ChEBI" id="CHEBI:15377"/>
        <dbReference type="ChEBI" id="CHEBI:28938"/>
        <dbReference type="ChEBI" id="CHEBI:29985"/>
        <dbReference type="ChEBI" id="CHEBI:58359"/>
        <dbReference type="EC" id="3.5.1.2"/>
    </reaction>
</comment>
<comment type="pathway">
    <text evidence="1">Amino-acid biosynthesis; L-histidine biosynthesis; L-histidine from 5-phospho-alpha-D-ribose 1-diphosphate: step 5/9.</text>
</comment>
<comment type="subunit">
    <text evidence="1">Heterodimer of HisH and HisF.</text>
</comment>
<comment type="subcellular location">
    <subcellularLocation>
        <location evidence="1">Cytoplasm</location>
    </subcellularLocation>
</comment>
<reference key="1">
    <citation type="journal article" date="2003" name="Lancet">
        <title>Genome sequence of Vibrio parahaemolyticus: a pathogenic mechanism distinct from that of V. cholerae.</title>
        <authorList>
            <person name="Makino K."/>
            <person name="Oshima K."/>
            <person name="Kurokawa K."/>
            <person name="Yokoyama K."/>
            <person name="Uda T."/>
            <person name="Tagomori K."/>
            <person name="Iijima Y."/>
            <person name="Najima M."/>
            <person name="Nakano M."/>
            <person name="Yamashita A."/>
            <person name="Kubota Y."/>
            <person name="Kimura S."/>
            <person name="Yasunaga T."/>
            <person name="Honda T."/>
            <person name="Shinagawa H."/>
            <person name="Hattori M."/>
            <person name="Iida T."/>
        </authorList>
    </citation>
    <scope>NUCLEOTIDE SEQUENCE [LARGE SCALE GENOMIC DNA]</scope>
    <source>
        <strain>RIMD 2210633</strain>
    </source>
</reference>
<evidence type="ECO:0000255" key="1">
    <source>
        <dbReference type="HAMAP-Rule" id="MF_00278"/>
    </source>
</evidence>
<gene>
    <name evidence="1" type="primary">hisH</name>
    <name type="ordered locus">VP1141</name>
</gene>
<accession>Q87QK8</accession>